<gene>
    <name type="ordered locus">MPN_236</name>
    <name type="ORF">G07_orf479</name>
    <name type="ORF">MP595</name>
</gene>
<keyword id="KW-1003">Cell membrane</keyword>
<keyword id="KW-0472">Membrane</keyword>
<keyword id="KW-1185">Reference proteome</keyword>
<keyword id="KW-0812">Transmembrane</keyword>
<keyword id="KW-1133">Transmembrane helix</keyword>
<evidence type="ECO:0000255" key="1"/>
<evidence type="ECO:0000305" key="2"/>
<reference key="1">
    <citation type="journal article" date="1996" name="Nucleic Acids Res.">
        <title>Complete sequence analysis of the genome of the bacterium Mycoplasma pneumoniae.</title>
        <authorList>
            <person name="Himmelreich R."/>
            <person name="Hilbert H."/>
            <person name="Plagens H."/>
            <person name="Pirkl E."/>
            <person name="Li B.-C."/>
            <person name="Herrmann R."/>
        </authorList>
    </citation>
    <scope>NUCLEOTIDE SEQUENCE [LARGE SCALE GENOMIC DNA]</scope>
    <source>
        <strain>ATCC 29342 / M129 / Subtype 1</strain>
    </source>
</reference>
<protein>
    <recommendedName>
        <fullName>Uncharacterized protein MG098 homolog</fullName>
    </recommendedName>
</protein>
<sequence length="479" mass="54161">MDKLINKPQPLTSDISTSGFIYFAVVFVAIMGYLLFKNLLFLFFFKRYPKNTPKIGVGNITTIAMIIAVAVSIVLVLMALAGGLAAALFRGYPGFRVTLELILVKISGLLFGPIVGIFSAATIDFLTVIFSGGVFNVGYVLGAILTGMIAGILREVLISTALLHNRNLSDFAYLVLSIGMVIAAFLITQFFVLGISNNLKEIKGDEEFRLKFNAPSIVFELSLTQYANILLYFTIAIVIAMLVLYIVWLVKQRHLSFEHSRFFYRSYKHANHQFTLFVLTKENWFYLILNVITLASTSLLMINIAFIPIFDTQTTGQTYEFWLLARLLFAPVIFLLDIIVIYPILLLLTPLMLKGFKTAVSKNQRKTLKQSFTDLQSVVLPIINKRKHQQLRQEELKRLARATHFDLTEGEMEKLLVEFKTITQSFDRVMNIDTTSVEPMYAPFNTSPTPLRKDKVIVEKHPEKLLANCKEMSVGFVKV</sequence>
<organism>
    <name type="scientific">Mycoplasma pneumoniae (strain ATCC 29342 / M129 / Subtype 1)</name>
    <name type="common">Mycoplasmoides pneumoniae</name>
    <dbReference type="NCBI Taxonomy" id="272634"/>
    <lineage>
        <taxon>Bacteria</taxon>
        <taxon>Bacillati</taxon>
        <taxon>Mycoplasmatota</taxon>
        <taxon>Mycoplasmoidales</taxon>
        <taxon>Mycoplasmoidaceae</taxon>
        <taxon>Mycoplasmoides</taxon>
    </lineage>
</organism>
<name>Y236_MYCPN</name>
<accession>P75535</accession>
<feature type="chain" id="PRO_0000105364" description="Uncharacterized protein MG098 homolog">
    <location>
        <begin position="1"/>
        <end position="479"/>
    </location>
</feature>
<feature type="transmembrane region" description="Helical" evidence="1">
    <location>
        <begin position="25"/>
        <end position="45"/>
    </location>
</feature>
<feature type="transmembrane region" description="Helical" evidence="1">
    <location>
        <begin position="63"/>
        <end position="83"/>
    </location>
</feature>
<feature type="transmembrane region" description="Helical" evidence="1">
    <location>
        <begin position="110"/>
        <end position="130"/>
    </location>
</feature>
<feature type="transmembrane region" description="Helical" evidence="1">
    <location>
        <begin position="133"/>
        <end position="153"/>
    </location>
</feature>
<feature type="transmembrane region" description="Helical" evidence="1">
    <location>
        <begin position="175"/>
        <end position="195"/>
    </location>
</feature>
<feature type="transmembrane region" description="Helical" evidence="1">
    <location>
        <begin position="229"/>
        <end position="249"/>
    </location>
</feature>
<feature type="transmembrane region" description="Helical" evidence="1">
    <location>
        <begin position="287"/>
        <end position="307"/>
    </location>
</feature>
<feature type="transmembrane region" description="Helical" evidence="1">
    <location>
        <begin position="328"/>
        <end position="348"/>
    </location>
</feature>
<comment type="subcellular location">
    <subcellularLocation>
        <location evidence="2">Cell membrane</location>
        <topology evidence="2">Multi-pass membrane protein</topology>
    </subcellularLocation>
</comment>
<comment type="similarity">
    <text evidence="2">In the C-terminal section; belongs to the GatC family.</text>
</comment>
<dbReference type="EMBL" id="U00089">
    <property type="protein sequence ID" value="AAB96243.1"/>
    <property type="molecule type" value="Genomic_DNA"/>
</dbReference>
<dbReference type="PIR" id="S73921">
    <property type="entry name" value="S73921"/>
</dbReference>
<dbReference type="RefSeq" id="NP_109924.1">
    <property type="nucleotide sequence ID" value="NC_000912.1"/>
</dbReference>
<dbReference type="RefSeq" id="WP_010874593.1">
    <property type="nucleotide sequence ID" value="NC_000912.1"/>
</dbReference>
<dbReference type="SMR" id="P75535"/>
<dbReference type="STRING" id="272634.MPN_236"/>
<dbReference type="EnsemblBacteria" id="AAB96243">
    <property type="protein sequence ID" value="AAB96243"/>
    <property type="gene ID" value="MPN_236"/>
</dbReference>
<dbReference type="KEGG" id="mpn:MPN_236"/>
<dbReference type="PATRIC" id="fig|272634.6.peg.255"/>
<dbReference type="HOGENOM" id="CLU_569629_0_0_14"/>
<dbReference type="OrthoDB" id="397253at2"/>
<dbReference type="BioCyc" id="MPNE272634:G1GJ3-376-MONOMER"/>
<dbReference type="Proteomes" id="UP000000808">
    <property type="component" value="Chromosome"/>
</dbReference>
<dbReference type="GO" id="GO:0005886">
    <property type="term" value="C:plasma membrane"/>
    <property type="evidence" value="ECO:0007669"/>
    <property type="project" value="UniProtKB-SubCell"/>
</dbReference>
<dbReference type="GO" id="GO:0070681">
    <property type="term" value="P:glutaminyl-tRNAGln biosynthesis via transamidation"/>
    <property type="evidence" value="ECO:0007669"/>
    <property type="project" value="TreeGrafter"/>
</dbReference>
<dbReference type="GO" id="GO:0006450">
    <property type="term" value="P:regulation of translational fidelity"/>
    <property type="evidence" value="ECO:0007669"/>
    <property type="project" value="InterPro"/>
</dbReference>
<dbReference type="Gene3D" id="1.10.1760.20">
    <property type="match status" value="1"/>
</dbReference>
<dbReference type="InterPro" id="IPR036113">
    <property type="entry name" value="Asp/Glu-ADT_sf_sub_c"/>
</dbReference>
<dbReference type="InterPro" id="IPR003837">
    <property type="entry name" value="GatC"/>
</dbReference>
<dbReference type="NCBIfam" id="TIGR00135">
    <property type="entry name" value="gatC"/>
    <property type="match status" value="1"/>
</dbReference>
<dbReference type="NCBIfam" id="NF009461">
    <property type="entry name" value="PRK12821.1"/>
    <property type="match status" value="1"/>
</dbReference>
<dbReference type="PANTHER" id="PTHR15004">
    <property type="entry name" value="GLUTAMYL-TRNA(GLN) AMIDOTRANSFERASE SUBUNIT C, MITOCHONDRIAL"/>
    <property type="match status" value="1"/>
</dbReference>
<dbReference type="PANTHER" id="PTHR15004:SF0">
    <property type="entry name" value="GLUTAMYL-TRNA(GLN) AMIDOTRANSFERASE SUBUNIT C, MITOCHONDRIAL"/>
    <property type="match status" value="1"/>
</dbReference>
<dbReference type="Pfam" id="PF02686">
    <property type="entry name" value="GatC"/>
    <property type="match status" value="1"/>
</dbReference>
<dbReference type="SUPFAM" id="SSF141000">
    <property type="entry name" value="Glu-tRNAGln amidotransferase C subunit"/>
    <property type="match status" value="1"/>
</dbReference>
<proteinExistence type="inferred from homology"/>